<feature type="chain" id="PRO_0000341670" description="S-formylglutathione hydrolase YeiG">
    <location>
        <begin position="1"/>
        <end position="278"/>
    </location>
</feature>
<feature type="active site" description="Charge relay system" evidence="1">
    <location>
        <position position="145"/>
    </location>
</feature>
<feature type="active site" description="Charge relay system" evidence="1">
    <location>
        <position position="223"/>
    </location>
</feature>
<feature type="active site" description="Charge relay system" evidence="1">
    <location>
        <position position="256"/>
    </location>
</feature>
<organism>
    <name type="scientific">Escherichia coli O157:H7</name>
    <dbReference type="NCBI Taxonomy" id="83334"/>
    <lineage>
        <taxon>Bacteria</taxon>
        <taxon>Pseudomonadati</taxon>
        <taxon>Pseudomonadota</taxon>
        <taxon>Gammaproteobacteria</taxon>
        <taxon>Enterobacterales</taxon>
        <taxon>Enterobacteriaceae</taxon>
        <taxon>Escherichia</taxon>
    </lineage>
</organism>
<name>SFGH2_ECO57</name>
<accession>Q8X635</accession>
<accession>Q7AC86</accession>
<protein>
    <recommendedName>
        <fullName>S-formylglutathione hydrolase YeiG</fullName>
        <shortName>FGH</shortName>
        <ecNumber>3.1.2.12</ecNumber>
    </recommendedName>
</protein>
<keyword id="KW-0378">Hydrolase</keyword>
<keyword id="KW-1185">Reference proteome</keyword>
<keyword id="KW-0719">Serine esterase</keyword>
<comment type="function">
    <text evidence="1">Serine hydrolase involved in the detoxification of formaldehyde. Hydrolyzes S-formylglutathione to glutathione and formate (By similarity).</text>
</comment>
<comment type="catalytic activity">
    <reaction>
        <text>S-formylglutathione + H2O = formate + glutathione + H(+)</text>
        <dbReference type="Rhea" id="RHEA:14961"/>
        <dbReference type="ChEBI" id="CHEBI:15377"/>
        <dbReference type="ChEBI" id="CHEBI:15378"/>
        <dbReference type="ChEBI" id="CHEBI:15740"/>
        <dbReference type="ChEBI" id="CHEBI:57688"/>
        <dbReference type="ChEBI" id="CHEBI:57925"/>
        <dbReference type="EC" id="3.1.2.12"/>
    </reaction>
</comment>
<comment type="similarity">
    <text evidence="2">Belongs to the esterase D family.</text>
</comment>
<gene>
    <name type="primary">yeiG</name>
    <name type="ordered locus">Z3410</name>
    <name type="ordered locus">ECs3046</name>
</gene>
<dbReference type="EC" id="3.1.2.12"/>
<dbReference type="EMBL" id="AE005174">
    <property type="protein sequence ID" value="AAG57292.1"/>
    <property type="molecule type" value="Genomic_DNA"/>
</dbReference>
<dbReference type="EMBL" id="BA000007">
    <property type="protein sequence ID" value="BAB36469.1"/>
    <property type="molecule type" value="Genomic_DNA"/>
</dbReference>
<dbReference type="PIR" id="F91009">
    <property type="entry name" value="F91009"/>
</dbReference>
<dbReference type="PIR" id="H85853">
    <property type="entry name" value="H85853"/>
</dbReference>
<dbReference type="RefSeq" id="NP_311073.1">
    <property type="nucleotide sequence ID" value="NC_002695.1"/>
</dbReference>
<dbReference type="RefSeq" id="WP_000425434.1">
    <property type="nucleotide sequence ID" value="NZ_VOAI01000001.1"/>
</dbReference>
<dbReference type="SMR" id="Q8X635"/>
<dbReference type="STRING" id="155864.Z3410"/>
<dbReference type="ESTHER" id="ecoli-yeiG">
    <property type="family name" value="A85-EsteraseD-FGH"/>
</dbReference>
<dbReference type="MEROPS" id="S09.A39"/>
<dbReference type="GeneID" id="916750"/>
<dbReference type="KEGG" id="ece:Z3410"/>
<dbReference type="KEGG" id="ecs:ECs_3046"/>
<dbReference type="PATRIC" id="fig|386585.9.peg.3175"/>
<dbReference type="eggNOG" id="COG0627">
    <property type="taxonomic scope" value="Bacteria"/>
</dbReference>
<dbReference type="HOGENOM" id="CLU_056472_0_0_6"/>
<dbReference type="OMA" id="PSDCPWG"/>
<dbReference type="Proteomes" id="UP000000558">
    <property type="component" value="Chromosome"/>
</dbReference>
<dbReference type="Proteomes" id="UP000002519">
    <property type="component" value="Chromosome"/>
</dbReference>
<dbReference type="GO" id="GO:0005829">
    <property type="term" value="C:cytosol"/>
    <property type="evidence" value="ECO:0007669"/>
    <property type="project" value="TreeGrafter"/>
</dbReference>
<dbReference type="GO" id="GO:0052689">
    <property type="term" value="F:carboxylic ester hydrolase activity"/>
    <property type="evidence" value="ECO:0007669"/>
    <property type="project" value="UniProtKB-KW"/>
</dbReference>
<dbReference type="GO" id="GO:0018738">
    <property type="term" value="F:S-formylglutathione hydrolase activity"/>
    <property type="evidence" value="ECO:0007669"/>
    <property type="project" value="UniProtKB-EC"/>
</dbReference>
<dbReference type="GO" id="GO:0046294">
    <property type="term" value="P:formaldehyde catabolic process"/>
    <property type="evidence" value="ECO:0007669"/>
    <property type="project" value="InterPro"/>
</dbReference>
<dbReference type="FunFam" id="3.40.50.1820:FF:000002">
    <property type="entry name" value="S-formylglutathione hydrolase"/>
    <property type="match status" value="1"/>
</dbReference>
<dbReference type="Gene3D" id="3.40.50.1820">
    <property type="entry name" value="alpha/beta hydrolase"/>
    <property type="match status" value="1"/>
</dbReference>
<dbReference type="InterPro" id="IPR029058">
    <property type="entry name" value="AB_hydrolase_fold"/>
</dbReference>
<dbReference type="InterPro" id="IPR000801">
    <property type="entry name" value="Esterase-like"/>
</dbReference>
<dbReference type="InterPro" id="IPR014186">
    <property type="entry name" value="S-formylglutathione_hydrol"/>
</dbReference>
<dbReference type="NCBIfam" id="TIGR02821">
    <property type="entry name" value="fghA_ester_D"/>
    <property type="match status" value="1"/>
</dbReference>
<dbReference type="PANTHER" id="PTHR10061">
    <property type="entry name" value="S-FORMYLGLUTATHIONE HYDROLASE"/>
    <property type="match status" value="1"/>
</dbReference>
<dbReference type="PANTHER" id="PTHR10061:SF1">
    <property type="entry name" value="S-FORMYLGLUTATHIONE HYDROLASE YEIG"/>
    <property type="match status" value="1"/>
</dbReference>
<dbReference type="Pfam" id="PF00756">
    <property type="entry name" value="Esterase"/>
    <property type="match status" value="1"/>
</dbReference>
<dbReference type="SUPFAM" id="SSF53474">
    <property type="entry name" value="alpha/beta-Hydrolases"/>
    <property type="match status" value="1"/>
</dbReference>
<reference key="1">
    <citation type="journal article" date="2001" name="Nature">
        <title>Genome sequence of enterohaemorrhagic Escherichia coli O157:H7.</title>
        <authorList>
            <person name="Perna N.T."/>
            <person name="Plunkett G. III"/>
            <person name="Burland V."/>
            <person name="Mau B."/>
            <person name="Glasner J.D."/>
            <person name="Rose D.J."/>
            <person name="Mayhew G.F."/>
            <person name="Evans P.S."/>
            <person name="Gregor J."/>
            <person name="Kirkpatrick H.A."/>
            <person name="Posfai G."/>
            <person name="Hackett J."/>
            <person name="Klink S."/>
            <person name="Boutin A."/>
            <person name="Shao Y."/>
            <person name="Miller L."/>
            <person name="Grotbeck E.J."/>
            <person name="Davis N.W."/>
            <person name="Lim A."/>
            <person name="Dimalanta E.T."/>
            <person name="Potamousis K."/>
            <person name="Apodaca J."/>
            <person name="Anantharaman T.S."/>
            <person name="Lin J."/>
            <person name="Yen G."/>
            <person name="Schwartz D.C."/>
            <person name="Welch R.A."/>
            <person name="Blattner F.R."/>
        </authorList>
    </citation>
    <scope>NUCLEOTIDE SEQUENCE [LARGE SCALE GENOMIC DNA]</scope>
    <source>
        <strain>O157:H7 / EDL933 / ATCC 700927 / EHEC</strain>
    </source>
</reference>
<reference key="2">
    <citation type="journal article" date="2001" name="DNA Res.">
        <title>Complete genome sequence of enterohemorrhagic Escherichia coli O157:H7 and genomic comparison with a laboratory strain K-12.</title>
        <authorList>
            <person name="Hayashi T."/>
            <person name="Makino K."/>
            <person name="Ohnishi M."/>
            <person name="Kurokawa K."/>
            <person name="Ishii K."/>
            <person name="Yokoyama K."/>
            <person name="Han C.-G."/>
            <person name="Ohtsubo E."/>
            <person name="Nakayama K."/>
            <person name="Murata T."/>
            <person name="Tanaka M."/>
            <person name="Tobe T."/>
            <person name="Iida T."/>
            <person name="Takami H."/>
            <person name="Honda T."/>
            <person name="Sasakawa C."/>
            <person name="Ogasawara N."/>
            <person name="Yasunaga T."/>
            <person name="Kuhara S."/>
            <person name="Shiba T."/>
            <person name="Hattori M."/>
            <person name="Shinagawa H."/>
        </authorList>
    </citation>
    <scope>NUCLEOTIDE SEQUENCE [LARGE SCALE GENOMIC DNA]</scope>
    <source>
        <strain>O157:H7 / Sakai / RIMD 0509952 / EHEC</strain>
    </source>
</reference>
<evidence type="ECO:0000250" key="1"/>
<evidence type="ECO:0000305" key="2"/>
<proteinExistence type="inferred from homology"/>
<sequence length="278" mass="31328">MEMLEEHRCFEGWQQRWRHDSSTLNCPMTFSIFLPPPRDHTPPPVLYWLSGLTCNDENFTTKAGAQRVAAELGIVLVMPDTSPRGEKVANDDGYDLGQGAGFYLNATQPPWATHYRMYDYLRDELPALVQSQFNVSDRCAISGHSMGGHGALIMALKNPGKYTSVSAFAPIVNPCSVPWGIKAFSRYLGEDKNAWLEWDSCALMYASNAQDAIPTLIDQGDNDQFLADQLQPAVLAEAARQKAWPMTLRIQPGYDHSYYFIASFIEDHLRFHAQYLLK</sequence>